<sequence>MSKSENLYSAARELIPGGVNSPVRAFTGVGGTPLFIEKADGAYLYDVDGKAYIDYVGSWGPMVLGHNHPAIRNAVIEAAERGLSFGAPTEMEVKMAQLVTELVPTMDMVRMVNSGTEATMSAIRLARGFTGRDKIIKFEGCYHGHADCLLVKAGSGALTLGQPNSPGVPADFAKHTLTCTYNDLASVRAAFEQYPQEIACIIVEPVAGNMNCVPPLPEFLPGLRALCDEFGALLIIDEVMTGFRVALAGAQDYFAVVPDLTCLGKIIGGGMPVGAFGGRRDVMDALAPTGPVYQAGTLSGNPIAMAAGFACLNEVAQPGIHETLDELTTRLAEGLLEAAEEAGIPLVVNHVGGMFGIFFTDAESVTCYQDVMACDVERFKRFFHMMLDEGVYLAPSAFEAGFMSVAHSMEDINNTIDAARRVFAKL</sequence>
<accession>Q0T852</accession>
<keyword id="KW-0963">Cytoplasm</keyword>
<keyword id="KW-0413">Isomerase</keyword>
<keyword id="KW-0627">Porphyrin biosynthesis</keyword>
<keyword id="KW-0663">Pyridoxal phosphate</keyword>
<reference key="1">
    <citation type="journal article" date="2006" name="BMC Genomics">
        <title>Complete genome sequence of Shigella flexneri 5b and comparison with Shigella flexneri 2a.</title>
        <authorList>
            <person name="Nie H."/>
            <person name="Yang F."/>
            <person name="Zhang X."/>
            <person name="Yang J."/>
            <person name="Chen L."/>
            <person name="Wang J."/>
            <person name="Xiong Z."/>
            <person name="Peng J."/>
            <person name="Sun L."/>
            <person name="Dong J."/>
            <person name="Xue Y."/>
            <person name="Xu X."/>
            <person name="Chen S."/>
            <person name="Yao Z."/>
            <person name="Shen Y."/>
            <person name="Jin Q."/>
        </authorList>
    </citation>
    <scope>NUCLEOTIDE SEQUENCE [LARGE SCALE GENOMIC DNA]</scope>
    <source>
        <strain>8401</strain>
    </source>
</reference>
<organism>
    <name type="scientific">Shigella flexneri serotype 5b (strain 8401)</name>
    <dbReference type="NCBI Taxonomy" id="373384"/>
    <lineage>
        <taxon>Bacteria</taxon>
        <taxon>Pseudomonadati</taxon>
        <taxon>Pseudomonadota</taxon>
        <taxon>Gammaproteobacteria</taxon>
        <taxon>Enterobacterales</taxon>
        <taxon>Enterobacteriaceae</taxon>
        <taxon>Shigella</taxon>
    </lineage>
</organism>
<comment type="catalytic activity">
    <reaction evidence="1">
        <text>(S)-4-amino-5-oxopentanoate = 5-aminolevulinate</text>
        <dbReference type="Rhea" id="RHEA:14265"/>
        <dbReference type="ChEBI" id="CHEBI:57501"/>
        <dbReference type="ChEBI" id="CHEBI:356416"/>
        <dbReference type="EC" id="5.4.3.8"/>
    </reaction>
</comment>
<comment type="cofactor">
    <cofactor evidence="1">
        <name>pyridoxal 5'-phosphate</name>
        <dbReference type="ChEBI" id="CHEBI:597326"/>
    </cofactor>
</comment>
<comment type="pathway">
    <text evidence="1">Porphyrin-containing compound metabolism; protoporphyrin-IX biosynthesis; 5-aminolevulinate from L-glutamyl-tRNA(Glu): step 2/2.</text>
</comment>
<comment type="subunit">
    <text evidence="1">Homodimer.</text>
</comment>
<comment type="subcellular location">
    <subcellularLocation>
        <location evidence="1">Cytoplasm</location>
    </subcellularLocation>
</comment>
<comment type="similarity">
    <text evidence="1">Belongs to the class-III pyridoxal-phosphate-dependent aminotransferase family. HemL subfamily.</text>
</comment>
<name>GSA_SHIF8</name>
<gene>
    <name evidence="1" type="primary">hemL</name>
    <name type="ordered locus">SFV_0139</name>
</gene>
<evidence type="ECO:0000255" key="1">
    <source>
        <dbReference type="HAMAP-Rule" id="MF_00375"/>
    </source>
</evidence>
<protein>
    <recommendedName>
        <fullName evidence="1">Glutamate-1-semialdehyde 2,1-aminomutase</fullName>
        <shortName evidence="1">GSA</shortName>
        <ecNumber evidence="1">5.4.3.8</ecNumber>
    </recommendedName>
    <alternativeName>
        <fullName evidence="1">Glutamate-1-semialdehyde aminotransferase</fullName>
        <shortName evidence="1">GSA-AT</shortName>
    </alternativeName>
</protein>
<dbReference type="EC" id="5.4.3.8" evidence="1"/>
<dbReference type="EMBL" id="CP000266">
    <property type="protein sequence ID" value="ABF02424.1"/>
    <property type="molecule type" value="Genomic_DNA"/>
</dbReference>
<dbReference type="RefSeq" id="WP_000045281.1">
    <property type="nucleotide sequence ID" value="NC_008258.1"/>
</dbReference>
<dbReference type="SMR" id="Q0T852"/>
<dbReference type="KEGG" id="sfv:SFV_0139"/>
<dbReference type="HOGENOM" id="CLU_016922_1_5_6"/>
<dbReference type="UniPathway" id="UPA00251">
    <property type="reaction ID" value="UER00317"/>
</dbReference>
<dbReference type="Proteomes" id="UP000000659">
    <property type="component" value="Chromosome"/>
</dbReference>
<dbReference type="GO" id="GO:0005737">
    <property type="term" value="C:cytoplasm"/>
    <property type="evidence" value="ECO:0007669"/>
    <property type="project" value="UniProtKB-SubCell"/>
</dbReference>
<dbReference type="GO" id="GO:0042286">
    <property type="term" value="F:glutamate-1-semialdehyde 2,1-aminomutase activity"/>
    <property type="evidence" value="ECO:0007669"/>
    <property type="project" value="UniProtKB-UniRule"/>
</dbReference>
<dbReference type="GO" id="GO:0030170">
    <property type="term" value="F:pyridoxal phosphate binding"/>
    <property type="evidence" value="ECO:0007669"/>
    <property type="project" value="InterPro"/>
</dbReference>
<dbReference type="GO" id="GO:0008483">
    <property type="term" value="F:transaminase activity"/>
    <property type="evidence" value="ECO:0007669"/>
    <property type="project" value="InterPro"/>
</dbReference>
<dbReference type="GO" id="GO:0006782">
    <property type="term" value="P:protoporphyrinogen IX biosynthetic process"/>
    <property type="evidence" value="ECO:0007669"/>
    <property type="project" value="UniProtKB-UniRule"/>
</dbReference>
<dbReference type="CDD" id="cd00610">
    <property type="entry name" value="OAT_like"/>
    <property type="match status" value="1"/>
</dbReference>
<dbReference type="FunFam" id="3.40.640.10:FF:000021">
    <property type="entry name" value="Glutamate-1-semialdehyde 2,1-aminomutase"/>
    <property type="match status" value="1"/>
</dbReference>
<dbReference type="FunFam" id="3.90.1150.10:FF:000012">
    <property type="entry name" value="Glutamate-1-semialdehyde 2,1-aminomutase"/>
    <property type="match status" value="1"/>
</dbReference>
<dbReference type="Gene3D" id="3.90.1150.10">
    <property type="entry name" value="Aspartate Aminotransferase, domain 1"/>
    <property type="match status" value="1"/>
</dbReference>
<dbReference type="Gene3D" id="3.40.640.10">
    <property type="entry name" value="Type I PLP-dependent aspartate aminotransferase-like (Major domain)"/>
    <property type="match status" value="1"/>
</dbReference>
<dbReference type="HAMAP" id="MF_00375">
    <property type="entry name" value="HemL_aminotrans_3"/>
    <property type="match status" value="1"/>
</dbReference>
<dbReference type="InterPro" id="IPR004639">
    <property type="entry name" value="4pyrrol_synth_GluAld_NH2Trfase"/>
</dbReference>
<dbReference type="InterPro" id="IPR005814">
    <property type="entry name" value="Aminotrans_3"/>
</dbReference>
<dbReference type="InterPro" id="IPR049704">
    <property type="entry name" value="Aminotrans_3_PPA_site"/>
</dbReference>
<dbReference type="InterPro" id="IPR015424">
    <property type="entry name" value="PyrdxlP-dep_Trfase"/>
</dbReference>
<dbReference type="InterPro" id="IPR015421">
    <property type="entry name" value="PyrdxlP-dep_Trfase_major"/>
</dbReference>
<dbReference type="InterPro" id="IPR015422">
    <property type="entry name" value="PyrdxlP-dep_Trfase_small"/>
</dbReference>
<dbReference type="NCBIfam" id="TIGR00713">
    <property type="entry name" value="hemL"/>
    <property type="match status" value="1"/>
</dbReference>
<dbReference type="NCBIfam" id="NF000818">
    <property type="entry name" value="PRK00062.1"/>
    <property type="match status" value="1"/>
</dbReference>
<dbReference type="PANTHER" id="PTHR43713">
    <property type="entry name" value="GLUTAMATE-1-SEMIALDEHYDE 2,1-AMINOMUTASE"/>
    <property type="match status" value="1"/>
</dbReference>
<dbReference type="PANTHER" id="PTHR43713:SF3">
    <property type="entry name" value="GLUTAMATE-1-SEMIALDEHYDE 2,1-AMINOMUTASE 1, CHLOROPLASTIC-RELATED"/>
    <property type="match status" value="1"/>
</dbReference>
<dbReference type="Pfam" id="PF00202">
    <property type="entry name" value="Aminotran_3"/>
    <property type="match status" value="1"/>
</dbReference>
<dbReference type="SUPFAM" id="SSF53383">
    <property type="entry name" value="PLP-dependent transferases"/>
    <property type="match status" value="1"/>
</dbReference>
<dbReference type="PROSITE" id="PS00600">
    <property type="entry name" value="AA_TRANSFER_CLASS_3"/>
    <property type="match status" value="1"/>
</dbReference>
<proteinExistence type="inferred from homology"/>
<feature type="chain" id="PRO_0000300952" description="Glutamate-1-semialdehyde 2,1-aminomutase">
    <location>
        <begin position="1"/>
        <end position="426"/>
    </location>
</feature>
<feature type="modified residue" description="N6-(pyridoxal phosphate)lysine" evidence="1">
    <location>
        <position position="265"/>
    </location>
</feature>